<sequence length="310" mass="34775">MKTLIRKFSRTAITVVLVILAFIAIFNAWVYYTESPWTRDARFSADVVAIAPDVSGLITQVNVHDNQLVKKGQILFTIDQPRYQKALEEAQADVAYYQVLAQEKRQEAGRRNRLGVQAMSREEIDQANNVLQTVLHQLAKAQATRDLAKLDLERTVIRAPADGWVTNLNVYTGEFITRGSTAVALVKQNSFYVLAYMEETKLEGVRPGYRAEITPLGSNKVLKGTVDSVAAGVTNASSTRDDKGMATIDSNLEWVRLAQRVPVRIRLDNQQENIWPAGTTATVVVTGKQDRDESQDSFFRKMAHRLREFG</sequence>
<keyword id="KW-0997">Cell inner membrane</keyword>
<keyword id="KW-1003">Cell membrane</keyword>
<keyword id="KW-0472">Membrane</keyword>
<keyword id="KW-0812">Transmembrane</keyword>
<keyword id="KW-1133">Transmembrane helix</keyword>
<keyword id="KW-0813">Transport</keyword>
<proteinExistence type="inferred from homology"/>
<comment type="function">
    <text evidence="1">Forms an efflux pump with AaeB.</text>
</comment>
<comment type="subcellular location">
    <subcellularLocation>
        <location evidence="1">Cell inner membrane</location>
        <topology evidence="1">Single-pass membrane protein</topology>
    </subcellularLocation>
</comment>
<comment type="induction">
    <text evidence="1">Positively coregulated with aaeB and aaeX by AaeR.</text>
</comment>
<comment type="similarity">
    <text evidence="1">Belongs to the membrane fusion protein (MFP) (TC 8.A.1) family.</text>
</comment>
<accession>B1XHL3</accession>
<evidence type="ECO:0000255" key="1">
    <source>
        <dbReference type="HAMAP-Rule" id="MF_01544"/>
    </source>
</evidence>
<organism>
    <name type="scientific">Escherichia coli (strain K12 / DH10B)</name>
    <dbReference type="NCBI Taxonomy" id="316385"/>
    <lineage>
        <taxon>Bacteria</taxon>
        <taxon>Pseudomonadati</taxon>
        <taxon>Pseudomonadota</taxon>
        <taxon>Gammaproteobacteria</taxon>
        <taxon>Enterobacterales</taxon>
        <taxon>Enterobacteriaceae</taxon>
        <taxon>Escherichia</taxon>
    </lineage>
</organism>
<gene>
    <name evidence="1" type="primary">aaeA</name>
    <name type="ordered locus">ECDH10B_3418</name>
</gene>
<feature type="chain" id="PRO_1000146715" description="p-hydroxybenzoic acid efflux pump subunit AaeA">
    <location>
        <begin position="1"/>
        <end position="310"/>
    </location>
</feature>
<feature type="transmembrane region" description="Helical" evidence="1">
    <location>
        <begin position="12"/>
        <end position="32"/>
    </location>
</feature>
<reference key="1">
    <citation type="journal article" date="2008" name="J. Bacteriol.">
        <title>The complete genome sequence of Escherichia coli DH10B: insights into the biology of a laboratory workhorse.</title>
        <authorList>
            <person name="Durfee T."/>
            <person name="Nelson R."/>
            <person name="Baldwin S."/>
            <person name="Plunkett G. III"/>
            <person name="Burland V."/>
            <person name="Mau B."/>
            <person name="Petrosino J.F."/>
            <person name="Qin X."/>
            <person name="Muzny D.M."/>
            <person name="Ayele M."/>
            <person name="Gibbs R.A."/>
            <person name="Csorgo B."/>
            <person name="Posfai G."/>
            <person name="Weinstock G.M."/>
            <person name="Blattner F.R."/>
        </authorList>
    </citation>
    <scope>NUCLEOTIDE SEQUENCE [LARGE SCALE GENOMIC DNA]</scope>
    <source>
        <strain>K12 / DH10B</strain>
    </source>
</reference>
<protein>
    <recommendedName>
        <fullName evidence="1">p-hydroxybenzoic acid efflux pump subunit AaeA</fullName>
        <shortName evidence="1">pHBA efflux pump protein A</shortName>
    </recommendedName>
</protein>
<name>AAEA_ECODH</name>
<dbReference type="EMBL" id="CP000948">
    <property type="protein sequence ID" value="ACB04314.1"/>
    <property type="molecule type" value="Genomic_DNA"/>
</dbReference>
<dbReference type="RefSeq" id="WP_000854021.1">
    <property type="nucleotide sequence ID" value="NC_010473.1"/>
</dbReference>
<dbReference type="SMR" id="B1XHL3"/>
<dbReference type="GeneID" id="75206091"/>
<dbReference type="KEGG" id="ecd:ECDH10B_3418"/>
<dbReference type="HOGENOM" id="CLU_018816_15_2_6"/>
<dbReference type="GO" id="GO:0005886">
    <property type="term" value="C:plasma membrane"/>
    <property type="evidence" value="ECO:0007669"/>
    <property type="project" value="UniProtKB-SubCell"/>
</dbReference>
<dbReference type="GO" id="GO:0022857">
    <property type="term" value="F:transmembrane transporter activity"/>
    <property type="evidence" value="ECO:0007669"/>
    <property type="project" value="UniProtKB-UniRule"/>
</dbReference>
<dbReference type="FunFam" id="2.40.30.170:FF:000002">
    <property type="entry name" value="p-hydroxybenzoic acid efflux pump subunit AaeA"/>
    <property type="match status" value="1"/>
</dbReference>
<dbReference type="FunFam" id="2.40.50.100:FF:000018">
    <property type="entry name" value="p-hydroxybenzoic acid efflux pump subunit AaeA"/>
    <property type="match status" value="1"/>
</dbReference>
<dbReference type="Gene3D" id="2.40.30.170">
    <property type="match status" value="1"/>
</dbReference>
<dbReference type="Gene3D" id="2.40.50.100">
    <property type="match status" value="1"/>
</dbReference>
<dbReference type="HAMAP" id="MF_01544">
    <property type="entry name" value="AaeA"/>
    <property type="match status" value="1"/>
</dbReference>
<dbReference type="InterPro" id="IPR043602">
    <property type="entry name" value="CusB-like_dom_1"/>
</dbReference>
<dbReference type="InterPro" id="IPR032317">
    <property type="entry name" value="CusB_D23"/>
</dbReference>
<dbReference type="InterPro" id="IPR050393">
    <property type="entry name" value="MFP_Efflux_Pump"/>
</dbReference>
<dbReference type="InterPro" id="IPR022871">
    <property type="entry name" value="PHBA_efflux_pump_AaeA"/>
</dbReference>
<dbReference type="InterPro" id="IPR006143">
    <property type="entry name" value="RND_pump_MFP"/>
</dbReference>
<dbReference type="NCBIfam" id="NF007850">
    <property type="entry name" value="PRK10559.1"/>
    <property type="match status" value="1"/>
</dbReference>
<dbReference type="NCBIfam" id="TIGR01730">
    <property type="entry name" value="RND_mfp"/>
    <property type="match status" value="1"/>
</dbReference>
<dbReference type="PANTHER" id="PTHR30367:SF12">
    <property type="entry name" value="P-HYDROXYBENZOIC ACID EFFLUX PUMP SUBUNIT AAEA"/>
    <property type="match status" value="1"/>
</dbReference>
<dbReference type="PANTHER" id="PTHR30367">
    <property type="entry name" value="P-HYDROXYBENZOIC ACID EFFLUX PUMP SUBUNIT AAEA-RELATED"/>
    <property type="match status" value="1"/>
</dbReference>
<dbReference type="Pfam" id="PF00529">
    <property type="entry name" value="CusB_dom_1"/>
    <property type="match status" value="1"/>
</dbReference>
<dbReference type="Pfam" id="PF16576">
    <property type="entry name" value="HlyD_D23"/>
    <property type="match status" value="1"/>
</dbReference>
<dbReference type="SUPFAM" id="SSF111369">
    <property type="entry name" value="HlyD-like secretion proteins"/>
    <property type="match status" value="1"/>
</dbReference>